<dbReference type="EMBL" id="CP000675">
    <property type="protein sequence ID" value="ABQ57204.1"/>
    <property type="molecule type" value="Genomic_DNA"/>
</dbReference>
<dbReference type="RefSeq" id="WP_011947893.1">
    <property type="nucleotide sequence ID" value="NZ_JAPMSS010000003.1"/>
</dbReference>
<dbReference type="SMR" id="A5IIK4"/>
<dbReference type="KEGG" id="lpc:LPC_3318"/>
<dbReference type="HOGENOM" id="CLU_016535_3_0_6"/>
<dbReference type="GO" id="GO:0005886">
    <property type="term" value="C:plasma membrane"/>
    <property type="evidence" value="ECO:0007669"/>
    <property type="project" value="UniProtKB-SubCell"/>
</dbReference>
<dbReference type="GO" id="GO:0032977">
    <property type="term" value="F:membrane insertase activity"/>
    <property type="evidence" value="ECO:0007669"/>
    <property type="project" value="InterPro"/>
</dbReference>
<dbReference type="GO" id="GO:0051205">
    <property type="term" value="P:protein insertion into membrane"/>
    <property type="evidence" value="ECO:0007669"/>
    <property type="project" value="TreeGrafter"/>
</dbReference>
<dbReference type="GO" id="GO:0015031">
    <property type="term" value="P:protein transport"/>
    <property type="evidence" value="ECO:0007669"/>
    <property type="project" value="UniProtKB-KW"/>
</dbReference>
<dbReference type="CDD" id="cd20070">
    <property type="entry name" value="5TM_YidC_Alb3"/>
    <property type="match status" value="1"/>
</dbReference>
<dbReference type="CDD" id="cd19961">
    <property type="entry name" value="EcYidC-like_peri"/>
    <property type="match status" value="1"/>
</dbReference>
<dbReference type="Gene3D" id="2.70.98.90">
    <property type="match status" value="1"/>
</dbReference>
<dbReference type="HAMAP" id="MF_01810">
    <property type="entry name" value="YidC_type1"/>
    <property type="match status" value="1"/>
</dbReference>
<dbReference type="InterPro" id="IPR019998">
    <property type="entry name" value="Membr_insert_YidC"/>
</dbReference>
<dbReference type="InterPro" id="IPR028053">
    <property type="entry name" value="Membr_insert_YidC_N"/>
</dbReference>
<dbReference type="InterPro" id="IPR001708">
    <property type="entry name" value="YidC/ALB3/OXA1/COX18"/>
</dbReference>
<dbReference type="InterPro" id="IPR028055">
    <property type="entry name" value="YidC/Oxa/ALB_C"/>
</dbReference>
<dbReference type="InterPro" id="IPR047196">
    <property type="entry name" value="YidC_ALB_C"/>
</dbReference>
<dbReference type="InterPro" id="IPR038221">
    <property type="entry name" value="YidC_periplasmic_sf"/>
</dbReference>
<dbReference type="NCBIfam" id="NF002352">
    <property type="entry name" value="PRK01318.1-3"/>
    <property type="match status" value="1"/>
</dbReference>
<dbReference type="NCBIfam" id="TIGR03593">
    <property type="entry name" value="yidC_nterm"/>
    <property type="match status" value="1"/>
</dbReference>
<dbReference type="NCBIfam" id="TIGR03592">
    <property type="entry name" value="yidC_oxa1_cterm"/>
    <property type="match status" value="1"/>
</dbReference>
<dbReference type="PANTHER" id="PTHR12428:SF65">
    <property type="entry name" value="CYTOCHROME C OXIDASE ASSEMBLY PROTEIN COX18, MITOCHONDRIAL"/>
    <property type="match status" value="1"/>
</dbReference>
<dbReference type="PANTHER" id="PTHR12428">
    <property type="entry name" value="OXA1"/>
    <property type="match status" value="1"/>
</dbReference>
<dbReference type="Pfam" id="PF02096">
    <property type="entry name" value="60KD_IMP"/>
    <property type="match status" value="1"/>
</dbReference>
<dbReference type="Pfam" id="PF14849">
    <property type="entry name" value="YidC_periplas"/>
    <property type="match status" value="1"/>
</dbReference>
<dbReference type="PRINTS" id="PR00701">
    <property type="entry name" value="60KDINNERMP"/>
</dbReference>
<dbReference type="PRINTS" id="PR01900">
    <property type="entry name" value="YIDCPROTEIN"/>
</dbReference>
<feature type="chain" id="PRO_1000070113" description="Membrane protein insertase YidC">
    <location>
        <begin position="1"/>
        <end position="556"/>
    </location>
</feature>
<feature type="transmembrane region" description="Helical" evidence="1">
    <location>
        <begin position="6"/>
        <end position="26"/>
    </location>
</feature>
<feature type="transmembrane region" description="Helical" evidence="1">
    <location>
        <begin position="332"/>
        <end position="352"/>
    </location>
</feature>
<feature type="transmembrane region" description="Helical" evidence="1">
    <location>
        <begin position="358"/>
        <end position="378"/>
    </location>
</feature>
<feature type="transmembrane region" description="Helical" evidence="1">
    <location>
        <begin position="428"/>
        <end position="448"/>
    </location>
</feature>
<feature type="transmembrane region" description="Helical" evidence="1">
    <location>
        <begin position="501"/>
        <end position="521"/>
    </location>
</feature>
<evidence type="ECO:0000255" key="1">
    <source>
        <dbReference type="HAMAP-Rule" id="MF_01810"/>
    </source>
</evidence>
<reference key="1">
    <citation type="submission" date="2006-11" db="EMBL/GenBank/DDBJ databases">
        <title>Identification and characterization of a new conjugation/ type IVA secretion system (trb/tra) of L. pneumophila Corby localized on a mobile genomic island.</title>
        <authorList>
            <person name="Gloeckner G."/>
            <person name="Albert-Weissenberger C."/>
            <person name="Weinmann E."/>
            <person name="Jacobi S."/>
            <person name="Schunder E."/>
            <person name="Steinert M."/>
            <person name="Buchrieser C."/>
            <person name="Hacker J."/>
            <person name="Heuner K."/>
        </authorList>
    </citation>
    <scope>NUCLEOTIDE SEQUENCE [LARGE SCALE GENOMIC DNA]</scope>
    <source>
        <strain>Corby</strain>
    </source>
</reference>
<sequence length="556" mass="62506">MDIRRIVLYMALALIGLSLWNAWQIDYPAAQPVEDKTASQLTSDGHLLPQIIPSNAEQPVTLKAEEKASSGKQLIQVKTDVLDVGIDLKNGDIVKGLLLDYPLSVEDKNKPFPLLQNQASQRYVANSSLFVLDGQTPQSLDFDFTSEKEYYELKPDQNQLIVTLNGKSEDGLDVKKEFVFTKGSYLIEVNYKIANTGNSLWKGYFNTQLLRSSPKEDKSSIFHIGSYTGASFSNPGKNRYQKVSFSDMSKSNLDVDAKGGWIAMQQHYFLSAWVPNADSENKFYTLATDKDYTIGAVSQPITVKPKEDKIVGSKLYIGPEITSVLKGISPSLDLTVDYGILWFLSSLLFSLMKAIYTVVGNWGWSIVLVTVLIKLAFYRLSATSYKSMASMRKLQPKLQALRERYGDDKAKISQATMELYKQEKVNPLGGCLPILIQIPVFIALYWVLLESVELRQAPFIFWINDLASADPYHVLPLIMGATMLIQQKLNPAPADPMQAKVMMFLPILFTGLFWNFPSGLVLYWIVNNTLSILQQWYITRKYSDEKPAKKVVATAK</sequence>
<gene>
    <name evidence="1" type="primary">yidC</name>
    <name type="ordered locus">LPC_3318</name>
</gene>
<name>YIDC_LEGPC</name>
<proteinExistence type="inferred from homology"/>
<accession>A5IIK4</accession>
<keyword id="KW-0997">Cell inner membrane</keyword>
<keyword id="KW-1003">Cell membrane</keyword>
<keyword id="KW-0143">Chaperone</keyword>
<keyword id="KW-0472">Membrane</keyword>
<keyword id="KW-0653">Protein transport</keyword>
<keyword id="KW-0812">Transmembrane</keyword>
<keyword id="KW-1133">Transmembrane helix</keyword>
<keyword id="KW-0813">Transport</keyword>
<organism>
    <name type="scientific">Legionella pneumophila (strain Corby)</name>
    <dbReference type="NCBI Taxonomy" id="400673"/>
    <lineage>
        <taxon>Bacteria</taxon>
        <taxon>Pseudomonadati</taxon>
        <taxon>Pseudomonadota</taxon>
        <taxon>Gammaproteobacteria</taxon>
        <taxon>Legionellales</taxon>
        <taxon>Legionellaceae</taxon>
        <taxon>Legionella</taxon>
    </lineage>
</organism>
<protein>
    <recommendedName>
        <fullName evidence="1">Membrane protein insertase YidC</fullName>
    </recommendedName>
    <alternativeName>
        <fullName evidence="1">Foldase YidC</fullName>
    </alternativeName>
    <alternativeName>
        <fullName evidence="1">Membrane integrase YidC</fullName>
    </alternativeName>
    <alternativeName>
        <fullName evidence="1">Membrane protein YidC</fullName>
    </alternativeName>
</protein>
<comment type="function">
    <text evidence="1">Required for the insertion and/or proper folding and/or complex formation of integral membrane proteins into the membrane. Involved in integration of membrane proteins that insert both dependently and independently of the Sec translocase complex, as well as at least some lipoproteins. Aids folding of multispanning membrane proteins.</text>
</comment>
<comment type="subunit">
    <text evidence="1">Interacts with the Sec translocase complex via SecD. Specifically interacts with transmembrane segments of nascent integral membrane proteins during membrane integration.</text>
</comment>
<comment type="subcellular location">
    <subcellularLocation>
        <location evidence="1">Cell inner membrane</location>
        <topology evidence="1">Multi-pass membrane protein</topology>
    </subcellularLocation>
</comment>
<comment type="similarity">
    <text evidence="1">Belongs to the OXA1/ALB3/YidC family. Type 1 subfamily.</text>
</comment>